<accession>Q9RMT3</accession>
<accession>Q7DCN0</accession>
<proteinExistence type="inferred from homology"/>
<protein>
    <recommendedName>
        <fullName>Protein tonB2</fullName>
    </recommendedName>
</protein>
<feature type="chain" id="PRO_0000287768" description="Protein tonB2">
    <location>
        <begin position="1"/>
        <end position="270"/>
    </location>
</feature>
<feature type="topological domain" description="Cytoplasmic" evidence="2">
    <location>
        <begin position="1"/>
        <end position="51"/>
    </location>
</feature>
<feature type="transmembrane region" description="Helical" evidence="2">
    <location>
        <begin position="52"/>
        <end position="69"/>
    </location>
</feature>
<feature type="topological domain" description="Periplasmic" evidence="2">
    <location>
        <begin position="70"/>
        <end position="270"/>
    </location>
</feature>
<feature type="domain" description="TonB C-terminal" evidence="3">
    <location>
        <begin position="180"/>
        <end position="270"/>
    </location>
</feature>
<feature type="region of interest" description="Disordered" evidence="4">
    <location>
        <begin position="80"/>
        <end position="187"/>
    </location>
</feature>
<feature type="compositionally biased region" description="Pro residues" evidence="4">
    <location>
        <begin position="94"/>
        <end position="118"/>
    </location>
</feature>
<feature type="compositionally biased region" description="Basic residues" evidence="4">
    <location>
        <begin position="133"/>
        <end position="143"/>
    </location>
</feature>
<feature type="compositionally biased region" description="Pro residues" evidence="4">
    <location>
        <begin position="144"/>
        <end position="180"/>
    </location>
</feature>
<gene>
    <name type="primary">tonB2</name>
    <name type="ordered locus">PA0197</name>
</gene>
<sequence length="270" mass="28821">MATPQPVDARTQPWRETPGGDLVALGRPVRQALHLVRHNPAQGRVLSRRETILLVLFALTLHGAVIHWLSQQRTPALPEVPPQVPPMTIEFTAPAPPVVEPPPPEPLPPVVEEPPPPVVDENAVKPPPPKPVPKPKPKPKPQPRPKPAPKAVEPAPPAPPQPAAPPAPPAPAAAPAPLTPPSANAGYLHNPAPEYPALAMRRGWEGTVLLRVHVLASGSPSEIQVQKSSGREALDQAAVKAVKRWSFVPAKRGDKAEDGWVSVPIDFKLN</sequence>
<dbReference type="EMBL" id="AF190125">
    <property type="protein sequence ID" value="AAF04082.1"/>
    <property type="molecule type" value="Genomic_DNA"/>
</dbReference>
<dbReference type="EMBL" id="AE004091">
    <property type="protein sequence ID" value="AAG03586.1"/>
    <property type="molecule type" value="Genomic_DNA"/>
</dbReference>
<dbReference type="PIR" id="H83619">
    <property type="entry name" value="H83619"/>
</dbReference>
<dbReference type="RefSeq" id="NP_248888.1">
    <property type="nucleotide sequence ID" value="NC_002516.2"/>
</dbReference>
<dbReference type="RefSeq" id="WP_003117234.1">
    <property type="nucleotide sequence ID" value="NZ_QZGA01000009.1"/>
</dbReference>
<dbReference type="SMR" id="Q9RMT3"/>
<dbReference type="STRING" id="208964.PA0197"/>
<dbReference type="PaxDb" id="208964-PA0197"/>
<dbReference type="GeneID" id="879472"/>
<dbReference type="KEGG" id="pae:PA0197"/>
<dbReference type="PATRIC" id="fig|208964.12.peg.205"/>
<dbReference type="PseudoCAP" id="PA0197"/>
<dbReference type="HOGENOM" id="CLU_076057_2_0_6"/>
<dbReference type="InParanoid" id="Q9RMT3"/>
<dbReference type="OrthoDB" id="9792439at2"/>
<dbReference type="BioCyc" id="PAER208964:G1FZ6-199-MONOMER"/>
<dbReference type="Proteomes" id="UP000002438">
    <property type="component" value="Chromosome"/>
</dbReference>
<dbReference type="GO" id="GO:0030288">
    <property type="term" value="C:outer membrane-bounded periplasmic space"/>
    <property type="evidence" value="ECO:0007669"/>
    <property type="project" value="InterPro"/>
</dbReference>
<dbReference type="GO" id="GO:0098797">
    <property type="term" value="C:plasma membrane protein complex"/>
    <property type="evidence" value="ECO:0000318"/>
    <property type="project" value="GO_Central"/>
</dbReference>
<dbReference type="GO" id="GO:0031992">
    <property type="term" value="F:energy transducer activity"/>
    <property type="evidence" value="ECO:0000318"/>
    <property type="project" value="GO_Central"/>
</dbReference>
<dbReference type="GO" id="GO:0015031">
    <property type="term" value="P:protein transport"/>
    <property type="evidence" value="ECO:0007669"/>
    <property type="project" value="UniProtKB-KW"/>
</dbReference>
<dbReference type="GO" id="GO:0015891">
    <property type="term" value="P:siderophore transport"/>
    <property type="evidence" value="ECO:0007669"/>
    <property type="project" value="InterPro"/>
</dbReference>
<dbReference type="GO" id="GO:0055085">
    <property type="term" value="P:transmembrane transport"/>
    <property type="evidence" value="ECO:0007669"/>
    <property type="project" value="InterPro"/>
</dbReference>
<dbReference type="FunFam" id="3.30.1150.10:FF:000005">
    <property type="entry name" value="Protein TonB"/>
    <property type="match status" value="1"/>
</dbReference>
<dbReference type="Gene3D" id="3.30.1150.10">
    <property type="match status" value="1"/>
</dbReference>
<dbReference type="InterPro" id="IPR003538">
    <property type="entry name" value="TonB"/>
</dbReference>
<dbReference type="InterPro" id="IPR051045">
    <property type="entry name" value="TonB-dependent_transducer"/>
</dbReference>
<dbReference type="InterPro" id="IPR006260">
    <property type="entry name" value="TonB/TolA_C"/>
</dbReference>
<dbReference type="InterPro" id="IPR037682">
    <property type="entry name" value="TonB_C"/>
</dbReference>
<dbReference type="NCBIfam" id="TIGR01352">
    <property type="entry name" value="tonB_Cterm"/>
    <property type="match status" value="1"/>
</dbReference>
<dbReference type="PANTHER" id="PTHR33446:SF2">
    <property type="entry name" value="PROTEIN TONB"/>
    <property type="match status" value="1"/>
</dbReference>
<dbReference type="PANTHER" id="PTHR33446">
    <property type="entry name" value="PROTEIN TONB-RELATED"/>
    <property type="match status" value="1"/>
</dbReference>
<dbReference type="Pfam" id="PF03544">
    <property type="entry name" value="TonB_C"/>
    <property type="match status" value="1"/>
</dbReference>
<dbReference type="PRINTS" id="PR01374">
    <property type="entry name" value="TONBPROTEIN"/>
</dbReference>
<dbReference type="SUPFAM" id="SSF74653">
    <property type="entry name" value="TolA/TonB C-terminal domain"/>
    <property type="match status" value="1"/>
</dbReference>
<dbReference type="PROSITE" id="PS52015">
    <property type="entry name" value="TONB_CTD"/>
    <property type="match status" value="1"/>
</dbReference>
<keyword id="KW-0997">Cell inner membrane</keyword>
<keyword id="KW-1003">Cell membrane</keyword>
<keyword id="KW-0472">Membrane</keyword>
<keyword id="KW-0653">Protein transport</keyword>
<keyword id="KW-1185">Reference proteome</keyword>
<keyword id="KW-0812">Transmembrane</keyword>
<keyword id="KW-1133">Transmembrane helix</keyword>
<keyword id="KW-0813">Transport</keyword>
<name>TONB2_PSEAE</name>
<evidence type="ECO:0000250" key="1"/>
<evidence type="ECO:0000255" key="2"/>
<evidence type="ECO:0000255" key="3">
    <source>
        <dbReference type="PROSITE-ProRule" id="PRU01359"/>
    </source>
</evidence>
<evidence type="ECO:0000256" key="4">
    <source>
        <dbReference type="SAM" id="MobiDB-lite"/>
    </source>
</evidence>
<evidence type="ECO:0000305" key="5"/>
<reference key="1">
    <citation type="journal article" date="2000" name="FEMS Microbiol. Lett.">
        <title>A second tonB gene in Pseudomonas aeruginosa is linked to the exbB and exbD genes.</title>
        <authorList>
            <person name="Zhao Q."/>
            <person name="Poole K."/>
        </authorList>
    </citation>
    <scope>NUCLEOTIDE SEQUENCE [GENOMIC DNA]</scope>
    <source>
        <strain>PAO6609</strain>
    </source>
</reference>
<reference key="2">
    <citation type="journal article" date="2000" name="Nature">
        <title>Complete genome sequence of Pseudomonas aeruginosa PAO1, an opportunistic pathogen.</title>
        <authorList>
            <person name="Stover C.K."/>
            <person name="Pham X.-Q.T."/>
            <person name="Erwin A.L."/>
            <person name="Mizoguchi S.D."/>
            <person name="Warrener P."/>
            <person name="Hickey M.J."/>
            <person name="Brinkman F.S.L."/>
            <person name="Hufnagle W.O."/>
            <person name="Kowalik D.J."/>
            <person name="Lagrou M."/>
            <person name="Garber R.L."/>
            <person name="Goltry L."/>
            <person name="Tolentino E."/>
            <person name="Westbrock-Wadman S."/>
            <person name="Yuan Y."/>
            <person name="Brody L.L."/>
            <person name="Coulter S.N."/>
            <person name="Folger K.R."/>
            <person name="Kas A."/>
            <person name="Larbig K."/>
            <person name="Lim R.M."/>
            <person name="Smith K.A."/>
            <person name="Spencer D.H."/>
            <person name="Wong G.K.-S."/>
            <person name="Wu Z."/>
            <person name="Paulsen I.T."/>
            <person name="Reizer J."/>
            <person name="Saier M.H. Jr."/>
            <person name="Hancock R.E.W."/>
            <person name="Lory S."/>
            <person name="Olson M.V."/>
        </authorList>
    </citation>
    <scope>NUCLEOTIDE SEQUENCE [LARGE SCALE GENOMIC DNA]</scope>
    <source>
        <strain>ATCC 15692 / DSM 22644 / CIP 104116 / JCM 14847 / LMG 12228 / 1C / PRS 101 / PAO1</strain>
    </source>
</reference>
<organism>
    <name type="scientific">Pseudomonas aeruginosa (strain ATCC 15692 / DSM 22644 / CIP 104116 / JCM 14847 / LMG 12228 / 1C / PRS 101 / PAO1)</name>
    <dbReference type="NCBI Taxonomy" id="208964"/>
    <lineage>
        <taxon>Bacteria</taxon>
        <taxon>Pseudomonadati</taxon>
        <taxon>Pseudomonadota</taxon>
        <taxon>Gammaproteobacteria</taxon>
        <taxon>Pseudomonadales</taxon>
        <taxon>Pseudomonadaceae</taxon>
        <taxon>Pseudomonas</taxon>
    </lineage>
</organism>
<comment type="function">
    <text evidence="1">Interacts with outer membrane receptor proteins that carry out high-affinity binding and energy dependent uptake into the periplasmic space of specific substrates. It could act to transduce energy from the cytoplasmic membrane to specific energy-requiring processes in the outer membrane, resulting in the release into the periplasm of ligands bound by these outer membrane proteins (By similarity).</text>
</comment>
<comment type="subunit">
    <text evidence="1">Homodimer. Forms a complex with the accessory proteins ExbB and ExbD (By similarity).</text>
</comment>
<comment type="subcellular location">
    <subcellularLocation>
        <location evidence="1">Cell inner membrane</location>
        <topology evidence="1">Single-pass membrane protein</topology>
        <orientation evidence="1">Periplasmic side</orientation>
    </subcellularLocation>
</comment>
<comment type="similarity">
    <text evidence="5">Belongs to the TonB family.</text>
</comment>